<protein>
    <recommendedName>
        <fullName>Tumor necrosis factor alpha-induced protein 8</fullName>
        <shortName>TNF alpha-induced protein 8</shortName>
    </recommendedName>
</protein>
<accession>Q5RF18</accession>
<comment type="function">
    <text evidence="1">Acts as a negative mediator of apoptosis. Suppresses the TNF-mediated apoptosis by inhibiting caspase-8 activity but not the processing of procaspase-8, subsequently resulting in inhibition of BID cleavage and caspase-3 activation (By similarity).</text>
</comment>
<comment type="subcellular location">
    <subcellularLocation>
        <location evidence="1">Cytoplasm</location>
    </subcellularLocation>
</comment>
<comment type="similarity">
    <text evidence="3">Belongs to the TNFAIP8 family.</text>
</comment>
<gene>
    <name type="primary">TNFAIP8</name>
</gene>
<organism>
    <name type="scientific">Pongo abelii</name>
    <name type="common">Sumatran orangutan</name>
    <name type="synonym">Pongo pygmaeus abelii</name>
    <dbReference type="NCBI Taxonomy" id="9601"/>
    <lineage>
        <taxon>Eukaryota</taxon>
        <taxon>Metazoa</taxon>
        <taxon>Chordata</taxon>
        <taxon>Craniata</taxon>
        <taxon>Vertebrata</taxon>
        <taxon>Euteleostomi</taxon>
        <taxon>Mammalia</taxon>
        <taxon>Eutheria</taxon>
        <taxon>Euarchontoglires</taxon>
        <taxon>Primates</taxon>
        <taxon>Haplorrhini</taxon>
        <taxon>Catarrhini</taxon>
        <taxon>Hominidae</taxon>
        <taxon>Pongo</taxon>
    </lineage>
</organism>
<name>TFIP8_PONAB</name>
<sequence>MHSEAEESKEVATDVFNSKNLAVQAQKKILGKMVSKSIATTLIDDTSSEVLDELYRVTREYTQNKKEAEKIIKNLIKTVIKLAILYRNNQFNQDELALMEKFKKKVHQLAMTVVSFHQVDYTFDRNVLSRLLNECREMLHQIIRRHLTAKSHGRVNNVFDHFSDCDFLAALYNPFGNFKPHLQKLCDGINKMLDEENI</sequence>
<reference key="1">
    <citation type="submission" date="2004-11" db="EMBL/GenBank/DDBJ databases">
        <authorList>
            <consortium name="The German cDNA consortium"/>
        </authorList>
    </citation>
    <scope>NUCLEOTIDE SEQUENCE [LARGE SCALE MRNA]</scope>
    <source>
        <tissue>Kidney</tissue>
    </source>
</reference>
<dbReference type="EMBL" id="CR857343">
    <property type="protein sequence ID" value="CAH89639.1"/>
    <property type="molecule type" value="mRNA"/>
</dbReference>
<dbReference type="RefSeq" id="NP_001124734.1">
    <property type="nucleotide sequence ID" value="NM_001131262.2"/>
</dbReference>
<dbReference type="SMR" id="Q5RF18"/>
<dbReference type="STRING" id="9601.ENSPPYP00000017570"/>
<dbReference type="GeneID" id="100171583"/>
<dbReference type="KEGG" id="pon:100171583"/>
<dbReference type="CTD" id="25816"/>
<dbReference type="eggNOG" id="ENOG502S00N">
    <property type="taxonomic scope" value="Eukaryota"/>
</dbReference>
<dbReference type="InParanoid" id="Q5RF18"/>
<dbReference type="OrthoDB" id="10055976at2759"/>
<dbReference type="Proteomes" id="UP000001595">
    <property type="component" value="Unplaced"/>
</dbReference>
<dbReference type="GO" id="GO:0005737">
    <property type="term" value="C:cytoplasm"/>
    <property type="evidence" value="ECO:0000250"/>
    <property type="project" value="UniProtKB"/>
</dbReference>
<dbReference type="GO" id="GO:0043027">
    <property type="term" value="F:cysteine-type endopeptidase inhibitor activity involved in apoptotic process"/>
    <property type="evidence" value="ECO:0000250"/>
    <property type="project" value="UniProtKB"/>
</dbReference>
<dbReference type="GO" id="GO:0006915">
    <property type="term" value="P:apoptotic process"/>
    <property type="evidence" value="ECO:0007669"/>
    <property type="project" value="UniProtKB-KW"/>
</dbReference>
<dbReference type="GO" id="GO:0043065">
    <property type="term" value="P:positive regulation of apoptotic process"/>
    <property type="evidence" value="ECO:0000250"/>
    <property type="project" value="UniProtKB"/>
</dbReference>
<dbReference type="FunFam" id="1.20.1440.160:FF:000001">
    <property type="entry name" value="Tumor necrosis factor alpha-induced protein 8-like 1"/>
    <property type="match status" value="1"/>
</dbReference>
<dbReference type="Gene3D" id="1.20.1440.160">
    <property type="entry name" value="Tumor necrosis factor alpha-induced protein 8-like"/>
    <property type="match status" value="1"/>
</dbReference>
<dbReference type="InterPro" id="IPR008477">
    <property type="entry name" value="TNFAIP8-like"/>
</dbReference>
<dbReference type="InterPro" id="IPR038355">
    <property type="entry name" value="TNFAIP8_sf"/>
</dbReference>
<dbReference type="PANTHER" id="PTHR12757:SF3">
    <property type="entry name" value="TUMOR NECROSIS FACTOR ALPHA-INDUCED PROTEIN 8"/>
    <property type="match status" value="1"/>
</dbReference>
<dbReference type="PANTHER" id="PTHR12757">
    <property type="entry name" value="TUMOR NECROSIS FACTOR INDUCED PROTEIN"/>
    <property type="match status" value="1"/>
</dbReference>
<dbReference type="Pfam" id="PF05527">
    <property type="entry name" value="DUF758"/>
    <property type="match status" value="1"/>
</dbReference>
<keyword id="KW-0053">Apoptosis</keyword>
<keyword id="KW-0175">Coiled coil</keyword>
<keyword id="KW-0963">Cytoplasm</keyword>
<keyword id="KW-1185">Reference proteome</keyword>
<feature type="chain" id="PRO_0000285720" description="Tumor necrosis factor alpha-induced protein 8">
    <location>
        <begin position="1"/>
        <end position="198"/>
    </location>
</feature>
<feature type="coiled-coil region" evidence="2">
    <location>
        <begin position="49"/>
        <end position="83"/>
    </location>
</feature>
<proteinExistence type="evidence at transcript level"/>
<evidence type="ECO:0000250" key="1"/>
<evidence type="ECO:0000255" key="2"/>
<evidence type="ECO:0000305" key="3"/>